<feature type="chain" id="PRO_0000185947" description="Glutathione S-transferase D1">
    <location>
        <begin position="1"/>
        <end position="209"/>
    </location>
</feature>
<feature type="domain" description="GST N-terminal">
    <location>
        <begin position="1"/>
        <end position="81"/>
    </location>
</feature>
<feature type="domain" description="GST C-terminal">
    <location>
        <begin position="87"/>
        <end position="208"/>
    </location>
</feature>
<feature type="binding site" evidence="1">
    <location>
        <position position="10"/>
    </location>
    <ligand>
        <name>glutathione</name>
        <dbReference type="ChEBI" id="CHEBI:57925"/>
    </ligand>
</feature>
<feature type="binding site">
    <location>
        <begin position="51"/>
        <end position="53"/>
    </location>
    <ligand>
        <name>glutathione</name>
        <dbReference type="ChEBI" id="CHEBI:57925"/>
    </ligand>
</feature>
<feature type="binding site">
    <location>
        <begin position="65"/>
        <end position="67"/>
    </location>
    <ligand>
        <name>glutathione</name>
        <dbReference type="ChEBI" id="CHEBI:57925"/>
    </ligand>
</feature>
<feature type="strand" evidence="7">
    <location>
        <begin position="3"/>
        <end position="6"/>
    </location>
</feature>
<feature type="helix" evidence="7">
    <location>
        <begin position="11"/>
        <end position="23"/>
    </location>
</feature>
<feature type="strand" evidence="7">
    <location>
        <begin position="28"/>
        <end position="31"/>
    </location>
</feature>
<feature type="helix" evidence="7">
    <location>
        <begin position="34"/>
        <end position="36"/>
    </location>
</feature>
<feature type="helix" evidence="7">
    <location>
        <begin position="38"/>
        <end position="40"/>
    </location>
</feature>
<feature type="helix" evidence="7">
    <location>
        <begin position="42"/>
        <end position="45"/>
    </location>
</feature>
<feature type="strand" evidence="7">
    <location>
        <begin position="55"/>
        <end position="58"/>
    </location>
</feature>
<feature type="strand" evidence="7">
    <location>
        <begin position="61"/>
        <end position="64"/>
    </location>
</feature>
<feature type="helix" evidence="7">
    <location>
        <begin position="66"/>
        <end position="77"/>
    </location>
</feature>
<feature type="strand" evidence="7">
    <location>
        <begin position="79"/>
        <end position="81"/>
    </location>
</feature>
<feature type="helix" evidence="7">
    <location>
        <begin position="88"/>
        <end position="103"/>
    </location>
</feature>
<feature type="helix" evidence="7">
    <location>
        <begin position="105"/>
        <end position="119"/>
    </location>
</feature>
<feature type="helix" evidence="7">
    <location>
        <begin position="125"/>
        <end position="141"/>
    </location>
</feature>
<feature type="turn" evidence="7">
    <location>
        <begin position="142"/>
        <end position="144"/>
    </location>
</feature>
<feature type="strand" evidence="7">
    <location>
        <begin position="146"/>
        <end position="152"/>
    </location>
</feature>
<feature type="helix" evidence="7">
    <location>
        <begin position="155"/>
        <end position="169"/>
    </location>
</feature>
<feature type="helix" evidence="7">
    <location>
        <begin position="174"/>
        <end position="176"/>
    </location>
</feature>
<feature type="helix" evidence="7">
    <location>
        <begin position="178"/>
        <end position="190"/>
    </location>
</feature>
<feature type="helix" evidence="7">
    <location>
        <begin position="194"/>
        <end position="204"/>
    </location>
</feature>
<feature type="helix" evidence="7">
    <location>
        <begin position="205"/>
        <end position="207"/>
    </location>
</feature>
<proteinExistence type="evidence at protein level"/>
<evidence type="ECO:0000269" key="1">
    <source>
    </source>
</evidence>
<evidence type="ECO:0000269" key="2">
    <source>
    </source>
</evidence>
<evidence type="ECO:0000303" key="3">
    <source>
    </source>
</evidence>
<evidence type="ECO:0000303" key="4">
    <source>
    </source>
</evidence>
<evidence type="ECO:0000305" key="5"/>
<evidence type="ECO:0000312" key="6">
    <source>
        <dbReference type="FlyBase" id="FBgn0001149"/>
    </source>
</evidence>
<evidence type="ECO:0007829" key="7">
    <source>
        <dbReference type="PDB" id="3EIN"/>
    </source>
</evidence>
<accession>P20432</accession>
<accession>Q4JFI6</accession>
<accession>Q8MR98</accession>
<accession>Q9TX88</accession>
<accession>Q9VG99</accession>
<organism>
    <name type="scientific">Drosophila melanogaster</name>
    <name type="common">Fruit fly</name>
    <dbReference type="NCBI Taxonomy" id="7227"/>
    <lineage>
        <taxon>Eukaryota</taxon>
        <taxon>Metazoa</taxon>
        <taxon>Ecdysozoa</taxon>
        <taxon>Arthropoda</taxon>
        <taxon>Hexapoda</taxon>
        <taxon>Insecta</taxon>
        <taxon>Pterygota</taxon>
        <taxon>Neoptera</taxon>
        <taxon>Endopterygota</taxon>
        <taxon>Diptera</taxon>
        <taxon>Brachycera</taxon>
        <taxon>Muscomorpha</taxon>
        <taxon>Ephydroidea</taxon>
        <taxon>Drosophilidae</taxon>
        <taxon>Drosophila</taxon>
        <taxon>Sophophora</taxon>
    </lineage>
</organism>
<comment type="function">
    <text evidence="1 2">Conjugation of reduced glutathione to a wide number of exogenous and endogenous hydrophobic electrophiles (PubMed:20417639, PubMed:22082028). Has DDT dehydrochlorinase activity (PubMed:20417639). May be involved in detoxification (PubMed:22082028).</text>
</comment>
<comment type="catalytic activity">
    <reaction evidence="1 2">
        <text>RX + glutathione = an S-substituted glutathione + a halide anion + H(+)</text>
        <dbReference type="Rhea" id="RHEA:16437"/>
        <dbReference type="ChEBI" id="CHEBI:15378"/>
        <dbReference type="ChEBI" id="CHEBI:16042"/>
        <dbReference type="ChEBI" id="CHEBI:17792"/>
        <dbReference type="ChEBI" id="CHEBI:57925"/>
        <dbReference type="ChEBI" id="CHEBI:90779"/>
        <dbReference type="EC" id="2.5.1.18"/>
    </reaction>
</comment>
<comment type="catalytic activity">
    <reaction evidence="1">
        <text>1,1,1-trichloro-2,2-bis(4-chlorophenyl)ethane = 1,1-dichloro-2,2-bis(4-chlorophenyl)ethylene + chloride + H(+)</text>
        <dbReference type="Rhea" id="RHEA:19217"/>
        <dbReference type="ChEBI" id="CHEBI:15378"/>
        <dbReference type="ChEBI" id="CHEBI:16130"/>
        <dbReference type="ChEBI" id="CHEBI:16598"/>
        <dbReference type="ChEBI" id="CHEBI:17996"/>
        <dbReference type="EC" id="4.5.1.1"/>
    </reaction>
</comment>
<comment type="biophysicochemical properties">
    <kinetics>
        <KM evidence="2">0.23 mM for glutathione</KM>
        <KM evidence="2">0.45 mM for 1-chloro-2,4-dinitrobenzene</KM>
        <Vmax evidence="2">84.2 umol/min/mg enzyme with 1-chloro-2,4-dinitrobenzene as substrate</Vmax>
        <Vmax evidence="2">7.51 umol/min/mg enzyme with 4-hydroxy-2-nonenal as substrate</Vmax>
        <Vmax evidence="2">77.0 nmol/min/mg enzyme with adrenochrome as substrate</Vmax>
        <Vmax evidence="2">0.33 umol/min/mg enzyme with phenethyl isothiocyanate as substrate</Vmax>
        <Vmax evidence="2">0.517 umol/min/mg enzyme with prostaglandin A2 as substrate</Vmax>
        <Vmax evidence="2">0.012 umol/min/mg enzyme with 5-hydroperoxyeicosatetraenoic acid as substrate</Vmax>
        <Vmax evidence="2">0.22 umol/min/mg enzyme with 2-hydroxyethyl disulfide as substrate</Vmax>
    </kinetics>
</comment>
<comment type="subunit">
    <text evidence="1">Homodimer.</text>
</comment>
<comment type="interaction">
    <interactant intactId="EBI-97726">
        <id>P20432</id>
    </interactant>
    <interactant intactId="EBI-149969">
        <id>Q9VGA1</id>
        <label>GstD10</label>
    </interactant>
    <organismsDiffer>false</organismsDiffer>
    <experiments>5</experiments>
</comment>
<comment type="interaction">
    <interactant intactId="EBI-97726">
        <id>P20432</id>
    </interactant>
    <interactant intactId="EBI-2110499">
        <id>Q9VG93</id>
        <label>GstD7</label>
    </interactant>
    <organismsDiffer>false</organismsDiffer>
    <experiments>3</experiments>
</comment>
<comment type="interaction">
    <interactant intactId="EBI-97726">
        <id>P20432</id>
    </interactant>
    <interactant intactId="EBI-15116229">
        <id>Q9VG92</id>
        <label>GstD8</label>
    </interactant>
    <organismsDiffer>false</organismsDiffer>
    <experiments>5</experiments>
</comment>
<comment type="miscellaneous">
    <text>Has a specific activity toward 1-chloro-2,4-dinitrobenzene comparable to that for the mammalian glutathione S-transferases but did not have as broad a substrate specificity pattern. Has no GSH peroxidase activity.</text>
</comment>
<comment type="similarity">
    <text evidence="4">Belongs to the GST superfamily. Delta family.</text>
</comment>
<comment type="sequence caution" evidence="5">
    <conflict type="erroneous initiation">
        <sequence resource="EMBL-CDS" id="AAM52032"/>
    </conflict>
    <text>Extended N-terminus.</text>
</comment>
<name>GSTD1_DROME</name>
<gene>
    <name evidence="6" type="primary">GstD1</name>
    <name type="synonym">GST</name>
    <name type="synonym">Gst1</name>
    <name evidence="6" type="synonym">GSTD1-1</name>
    <name evidence="6" type="ORF">CG10045</name>
</gene>
<reference key="1">
    <citation type="journal article" date="1990" name="Proc. Natl. Acad. Sci. U.S.A.">
        <title>Drosophila glutathione S-transferase 1-1 shares a region of sequence homology with the maize glutathione S-transferase III.</title>
        <authorList>
            <person name="Toung Y.-P.S."/>
            <person name="Hsieh T.-S."/>
            <person name="Tu C.-P.D."/>
        </authorList>
    </citation>
    <scope>NUCLEOTIDE SEQUENCE [MRNA]</scope>
    <scope>PROTEIN SEQUENCE OF 1-20</scope>
    <source>
        <strain>Oregon-R</strain>
    </source>
</reference>
<reference key="2">
    <citation type="journal article" date="1991" name="Biochem. Biophys. Res. Commun.">
        <title>The Drosophila glutathione S-transferase 1-1 is encoded by an intronless gene at 87B.</title>
        <authorList>
            <person name="Toung Y.-P.S."/>
            <person name="Hsieh T.-S."/>
            <person name="Tu C.-P.D."/>
        </authorList>
    </citation>
    <scope>NUCLEOTIDE SEQUENCE [GENOMIC DNA / MRNA]</scope>
</reference>
<reference key="3">
    <citation type="journal article" date="1993" name="J. Biol. Chem.">
        <title>The glutathione S-transferase D genes. A divergently organized, intronless gene family in Drosophila melanogaster.</title>
        <authorList>
            <person name="Toung Y.-P.S."/>
            <person name="Hsieh T.-S."/>
            <person name="Tu C.-P.D."/>
        </authorList>
    </citation>
    <scope>NUCLEOTIDE SEQUENCE [GENOMIC DNA]</scope>
</reference>
<reference key="4">
    <citation type="journal article" date="2000" name="Science">
        <title>The genome sequence of Drosophila melanogaster.</title>
        <authorList>
            <person name="Adams M.D."/>
            <person name="Celniker S.E."/>
            <person name="Holt R.A."/>
            <person name="Evans C.A."/>
            <person name="Gocayne J.D."/>
            <person name="Amanatides P.G."/>
            <person name="Scherer S.E."/>
            <person name="Li P.W."/>
            <person name="Hoskins R.A."/>
            <person name="Galle R.F."/>
            <person name="George R.A."/>
            <person name="Lewis S.E."/>
            <person name="Richards S."/>
            <person name="Ashburner M."/>
            <person name="Henderson S.N."/>
            <person name="Sutton G.G."/>
            <person name="Wortman J.R."/>
            <person name="Yandell M.D."/>
            <person name="Zhang Q."/>
            <person name="Chen L.X."/>
            <person name="Brandon R.C."/>
            <person name="Rogers Y.-H.C."/>
            <person name="Blazej R.G."/>
            <person name="Champe M."/>
            <person name="Pfeiffer B.D."/>
            <person name="Wan K.H."/>
            <person name="Doyle C."/>
            <person name="Baxter E.G."/>
            <person name="Helt G."/>
            <person name="Nelson C.R."/>
            <person name="Miklos G.L.G."/>
            <person name="Abril J.F."/>
            <person name="Agbayani A."/>
            <person name="An H.-J."/>
            <person name="Andrews-Pfannkoch C."/>
            <person name="Baldwin D."/>
            <person name="Ballew R.M."/>
            <person name="Basu A."/>
            <person name="Baxendale J."/>
            <person name="Bayraktaroglu L."/>
            <person name="Beasley E.M."/>
            <person name="Beeson K.Y."/>
            <person name="Benos P.V."/>
            <person name="Berman B.P."/>
            <person name="Bhandari D."/>
            <person name="Bolshakov S."/>
            <person name="Borkova D."/>
            <person name="Botchan M.R."/>
            <person name="Bouck J."/>
            <person name="Brokstein P."/>
            <person name="Brottier P."/>
            <person name="Burtis K.C."/>
            <person name="Busam D.A."/>
            <person name="Butler H."/>
            <person name="Cadieu E."/>
            <person name="Center A."/>
            <person name="Chandra I."/>
            <person name="Cherry J.M."/>
            <person name="Cawley S."/>
            <person name="Dahlke C."/>
            <person name="Davenport L.B."/>
            <person name="Davies P."/>
            <person name="de Pablos B."/>
            <person name="Delcher A."/>
            <person name="Deng Z."/>
            <person name="Mays A.D."/>
            <person name="Dew I."/>
            <person name="Dietz S.M."/>
            <person name="Dodson K."/>
            <person name="Doup L.E."/>
            <person name="Downes M."/>
            <person name="Dugan-Rocha S."/>
            <person name="Dunkov B.C."/>
            <person name="Dunn P."/>
            <person name="Durbin K.J."/>
            <person name="Evangelista C.C."/>
            <person name="Ferraz C."/>
            <person name="Ferriera S."/>
            <person name="Fleischmann W."/>
            <person name="Fosler C."/>
            <person name="Gabrielian A.E."/>
            <person name="Garg N.S."/>
            <person name="Gelbart W.M."/>
            <person name="Glasser K."/>
            <person name="Glodek A."/>
            <person name="Gong F."/>
            <person name="Gorrell J.H."/>
            <person name="Gu Z."/>
            <person name="Guan P."/>
            <person name="Harris M."/>
            <person name="Harris N.L."/>
            <person name="Harvey D.A."/>
            <person name="Heiman T.J."/>
            <person name="Hernandez J.R."/>
            <person name="Houck J."/>
            <person name="Hostin D."/>
            <person name="Houston K.A."/>
            <person name="Howland T.J."/>
            <person name="Wei M.-H."/>
            <person name="Ibegwam C."/>
            <person name="Jalali M."/>
            <person name="Kalush F."/>
            <person name="Karpen G.H."/>
            <person name="Ke Z."/>
            <person name="Kennison J.A."/>
            <person name="Ketchum K.A."/>
            <person name="Kimmel B.E."/>
            <person name="Kodira C.D."/>
            <person name="Kraft C.L."/>
            <person name="Kravitz S."/>
            <person name="Kulp D."/>
            <person name="Lai Z."/>
            <person name="Lasko P."/>
            <person name="Lei Y."/>
            <person name="Levitsky A.A."/>
            <person name="Li J.H."/>
            <person name="Li Z."/>
            <person name="Liang Y."/>
            <person name="Lin X."/>
            <person name="Liu X."/>
            <person name="Mattei B."/>
            <person name="McIntosh T.C."/>
            <person name="McLeod M.P."/>
            <person name="McPherson D."/>
            <person name="Merkulov G."/>
            <person name="Milshina N.V."/>
            <person name="Mobarry C."/>
            <person name="Morris J."/>
            <person name="Moshrefi A."/>
            <person name="Mount S.M."/>
            <person name="Moy M."/>
            <person name="Murphy B."/>
            <person name="Murphy L."/>
            <person name="Muzny D.M."/>
            <person name="Nelson D.L."/>
            <person name="Nelson D.R."/>
            <person name="Nelson K.A."/>
            <person name="Nixon K."/>
            <person name="Nusskern D.R."/>
            <person name="Pacleb J.M."/>
            <person name="Palazzolo M."/>
            <person name="Pittman G.S."/>
            <person name="Pan S."/>
            <person name="Pollard J."/>
            <person name="Puri V."/>
            <person name="Reese M.G."/>
            <person name="Reinert K."/>
            <person name="Remington K."/>
            <person name="Saunders R.D.C."/>
            <person name="Scheeler F."/>
            <person name="Shen H."/>
            <person name="Shue B.C."/>
            <person name="Siden-Kiamos I."/>
            <person name="Simpson M."/>
            <person name="Skupski M.P."/>
            <person name="Smith T.J."/>
            <person name="Spier E."/>
            <person name="Spradling A.C."/>
            <person name="Stapleton M."/>
            <person name="Strong R."/>
            <person name="Sun E."/>
            <person name="Svirskas R."/>
            <person name="Tector C."/>
            <person name="Turner R."/>
            <person name="Venter E."/>
            <person name="Wang A.H."/>
            <person name="Wang X."/>
            <person name="Wang Z.-Y."/>
            <person name="Wassarman D.A."/>
            <person name="Weinstock G.M."/>
            <person name="Weissenbach J."/>
            <person name="Williams S.M."/>
            <person name="Woodage T."/>
            <person name="Worley K.C."/>
            <person name="Wu D."/>
            <person name="Yang S."/>
            <person name="Yao Q.A."/>
            <person name="Ye J."/>
            <person name="Yeh R.-F."/>
            <person name="Zaveri J.S."/>
            <person name="Zhan M."/>
            <person name="Zhang G."/>
            <person name="Zhao Q."/>
            <person name="Zheng L."/>
            <person name="Zheng X.H."/>
            <person name="Zhong F.N."/>
            <person name="Zhong W."/>
            <person name="Zhou X."/>
            <person name="Zhu S.C."/>
            <person name="Zhu X."/>
            <person name="Smith H.O."/>
            <person name="Gibbs R.A."/>
            <person name="Myers E.W."/>
            <person name="Rubin G.M."/>
            <person name="Venter J.C."/>
        </authorList>
    </citation>
    <scope>NUCLEOTIDE SEQUENCE [LARGE SCALE GENOMIC DNA]</scope>
    <source>
        <strain>Berkeley</strain>
    </source>
</reference>
<reference key="5">
    <citation type="journal article" date="2002" name="Genome Biol.">
        <title>Annotation of the Drosophila melanogaster euchromatic genome: a systematic review.</title>
        <authorList>
            <person name="Misra S."/>
            <person name="Crosby M.A."/>
            <person name="Mungall C.J."/>
            <person name="Matthews B.B."/>
            <person name="Campbell K.S."/>
            <person name="Hradecky P."/>
            <person name="Huang Y."/>
            <person name="Kaminker J.S."/>
            <person name="Millburn G.H."/>
            <person name="Prochnik S.E."/>
            <person name="Smith C.D."/>
            <person name="Tupy J.L."/>
            <person name="Whitfield E.J."/>
            <person name="Bayraktaroglu L."/>
            <person name="Berman B.P."/>
            <person name="Bettencourt B.R."/>
            <person name="Celniker S.E."/>
            <person name="de Grey A.D.N.J."/>
            <person name="Drysdale R.A."/>
            <person name="Harris N.L."/>
            <person name="Richter J."/>
            <person name="Russo S."/>
            <person name="Schroeder A.J."/>
            <person name="Shu S.Q."/>
            <person name="Stapleton M."/>
            <person name="Yamada C."/>
            <person name="Ashburner M."/>
            <person name="Gelbart W.M."/>
            <person name="Rubin G.M."/>
            <person name="Lewis S.E."/>
        </authorList>
    </citation>
    <scope>GENOME REANNOTATION</scope>
    <source>
        <strain>Berkeley</strain>
    </source>
</reference>
<reference key="6">
    <citation type="journal article" date="2002" name="Genome Biol.">
        <title>A Drosophila full-length cDNA resource.</title>
        <authorList>
            <person name="Stapleton M."/>
            <person name="Carlson J.W."/>
            <person name="Brokstein P."/>
            <person name="Yu C."/>
            <person name="Champe M."/>
            <person name="George R.A."/>
            <person name="Guarin H."/>
            <person name="Kronmiller B."/>
            <person name="Pacleb J.M."/>
            <person name="Park S."/>
            <person name="Wan K.H."/>
            <person name="Rubin G.M."/>
            <person name="Celniker S.E."/>
        </authorList>
    </citation>
    <scope>NUCLEOTIDE SEQUENCE [LARGE SCALE MRNA]</scope>
    <source>
        <strain>Berkeley</strain>
        <tissue>Head</tissue>
    </source>
</reference>
<reference key="7">
    <citation type="journal article" date="2012" name="Biochem. J.">
        <title>A preliminary characterization of the cytosolic glutathione transferase proteome from Drosophila melanogaster.</title>
        <authorList>
            <person name="Saisawang C."/>
            <person name="Wongsantichon J."/>
            <person name="Ketterman A.J."/>
        </authorList>
    </citation>
    <scope>FUNCTION</scope>
    <scope>CATALYTIC ACTIVITY</scope>
    <scope>BIOPHYSICOCHEMICAL PROPERTIES</scope>
</reference>
<reference key="8">
    <citation type="journal article" date="2010" name="J. Mol. Biol.">
        <title>Recognition and detoxification of the insecticide DDT by Drosophila melanogaster glutathione S-transferase D1.</title>
        <authorList>
            <person name="Low W.Y."/>
            <person name="Feil S.C."/>
            <person name="Ng H.L."/>
            <person name="Gorman M.A."/>
            <person name="Morton C.J."/>
            <person name="Pyke J."/>
            <person name="McConville M.J."/>
            <person name="Bieri M."/>
            <person name="Mok Y.F."/>
            <person name="Robin C."/>
            <person name="Gooley P.R."/>
            <person name="Parker M.W."/>
            <person name="Batterham P."/>
        </authorList>
    </citation>
    <scope>X-RAY CRYSTALLOGRAPHY (1.13 ANGSTROMS) IN COMPLEX WITH GLUTATHIONE</scope>
    <scope>FUNCTION</scope>
    <scope>CATALYTIC ACTIVITY</scope>
    <scope>SUBUNIT</scope>
</reference>
<protein>
    <recommendedName>
        <fullName evidence="3 4">Glutathione S-transferase D1</fullName>
        <ecNumber evidence="1 2">2.5.1.18</ecNumber>
        <ecNumber evidence="1">4.5.1.1</ecNumber>
    </recommendedName>
    <alternativeName>
        <fullName evidence="3">DDT-dehydrochlorinase</fullName>
    </alternativeName>
</protein>
<sequence length="209" mass="23866">MVDFYYLPGSSPCRSVIMTAKAVGVELNKKLLNLQAGEHLKPEFLKINPQHTIPTLVDNGFALWESRAIQVYLVEKYGKTDSLYPKCPKKRAVINQRLYFDMGTLYQSFANYYYPQVFAKAPADPEAFKKIEAAFEFLNTFLEGQDYAAGDSLTVADIALVATVSTFEVAKFEISKYANVNRWYENAKKVTPGWEENWAGCLEFKKYFE</sequence>
<keyword id="KW-0002">3D-structure</keyword>
<keyword id="KW-0216">Detoxification</keyword>
<keyword id="KW-0903">Direct protein sequencing</keyword>
<keyword id="KW-0456">Lyase</keyword>
<keyword id="KW-1185">Reference proteome</keyword>
<keyword id="KW-0808">Transferase</keyword>
<dbReference type="EC" id="2.5.1.18" evidence="1 2"/>
<dbReference type="EC" id="4.5.1.1" evidence="1"/>
<dbReference type="EMBL" id="X14233">
    <property type="protein sequence ID" value="CAA32449.1"/>
    <property type="molecule type" value="mRNA"/>
</dbReference>
<dbReference type="EMBL" id="S51044">
    <property type="protein sequence ID" value="AAA04220.1"/>
    <property type="molecule type" value="mRNA"/>
</dbReference>
<dbReference type="EMBL" id="M97702">
    <property type="status" value="NOT_ANNOTATED_CDS"/>
    <property type="molecule type" value="Genomic_DNA"/>
</dbReference>
<dbReference type="EMBL" id="AE014297">
    <property type="protein sequence ID" value="AAF54786.1"/>
    <property type="molecule type" value="Genomic_DNA"/>
</dbReference>
<dbReference type="EMBL" id="AE014297">
    <property type="protein sequence ID" value="ABC66168.1"/>
    <property type="molecule type" value="Genomic_DNA"/>
</dbReference>
<dbReference type="EMBL" id="AY121705">
    <property type="protein sequence ID" value="AAM52032.1"/>
    <property type="status" value="ALT_INIT"/>
    <property type="molecule type" value="mRNA"/>
</dbReference>
<dbReference type="PIR" id="A34798">
    <property type="entry name" value="XUFF11"/>
</dbReference>
<dbReference type="RefSeq" id="NP_001034042.1">
    <property type="nucleotide sequence ID" value="NM_001038953.2"/>
</dbReference>
<dbReference type="RefSeq" id="NP_524326.1">
    <property type="nucleotide sequence ID" value="NM_079602.5"/>
</dbReference>
<dbReference type="PDB" id="3EIN">
    <property type="method" value="X-ray"/>
    <property type="resolution" value="1.13 A"/>
    <property type="chains" value="A=1-209"/>
</dbReference>
<dbReference type="PDB" id="3MAK">
    <property type="method" value="X-ray"/>
    <property type="resolution" value="1.80 A"/>
    <property type="chains" value="A=1-209"/>
</dbReference>
<dbReference type="PDBsum" id="3EIN"/>
<dbReference type="PDBsum" id="3MAK"/>
<dbReference type="SMR" id="P20432"/>
<dbReference type="BioGRID" id="66612">
    <property type="interactions" value="21"/>
</dbReference>
<dbReference type="DIP" id="DIP-17237N"/>
<dbReference type="FunCoup" id="P20432">
    <property type="interactions" value="628"/>
</dbReference>
<dbReference type="IntAct" id="P20432">
    <property type="interactions" value="14"/>
</dbReference>
<dbReference type="STRING" id="7227.FBpp0099824"/>
<dbReference type="GlyGen" id="P20432">
    <property type="glycosylation" value="1 site, 1 O-linked glycan (1 site)"/>
</dbReference>
<dbReference type="PaxDb" id="7227-FBpp0099824"/>
<dbReference type="DNASU" id="41503"/>
<dbReference type="EnsemblMetazoa" id="FBtr0082607">
    <property type="protein sequence ID" value="FBpp0082077"/>
    <property type="gene ID" value="FBgn0001149"/>
</dbReference>
<dbReference type="EnsemblMetazoa" id="FBtr0100410">
    <property type="protein sequence ID" value="FBpp0099824"/>
    <property type="gene ID" value="FBgn0001149"/>
</dbReference>
<dbReference type="GeneID" id="41503"/>
<dbReference type="KEGG" id="dme:Dmel_CG10045"/>
<dbReference type="AGR" id="FB:FBgn0001149"/>
<dbReference type="CTD" id="41503"/>
<dbReference type="FlyBase" id="FBgn0001149">
    <property type="gene designation" value="GstD1"/>
</dbReference>
<dbReference type="VEuPathDB" id="VectorBase:FBgn0001149"/>
<dbReference type="eggNOG" id="KOG0867">
    <property type="taxonomic scope" value="Eukaryota"/>
</dbReference>
<dbReference type="GeneTree" id="ENSGT00940000164816"/>
<dbReference type="HOGENOM" id="CLU_011226_2_1_1"/>
<dbReference type="InParanoid" id="P20432"/>
<dbReference type="OMA" id="ESNTICR"/>
<dbReference type="OrthoDB" id="2309723at2759"/>
<dbReference type="PhylomeDB" id="P20432"/>
<dbReference type="SABIO-RK" id="P20432"/>
<dbReference type="BioGRID-ORCS" id="41503">
    <property type="hits" value="0 hits in 1 CRISPR screen"/>
</dbReference>
<dbReference type="ChiTaRS" id="GstS1">
    <property type="organism name" value="fly"/>
</dbReference>
<dbReference type="EvolutionaryTrace" id="P20432"/>
<dbReference type="GenomeRNAi" id="41503"/>
<dbReference type="PRO" id="PR:P20432"/>
<dbReference type="Proteomes" id="UP000000803">
    <property type="component" value="Chromosome 3R"/>
</dbReference>
<dbReference type="Bgee" id="FBgn0001149">
    <property type="expression patterns" value="Expressed in seminal fluid secreting gland and 256 other cell types or tissues"/>
</dbReference>
<dbReference type="GO" id="GO:0005737">
    <property type="term" value="C:cytoplasm"/>
    <property type="evidence" value="ECO:0000250"/>
    <property type="project" value="FlyBase"/>
</dbReference>
<dbReference type="GO" id="GO:0018833">
    <property type="term" value="F:DDT-dehydrochlorinase activity"/>
    <property type="evidence" value="ECO:0000314"/>
    <property type="project" value="FlyBase"/>
</dbReference>
<dbReference type="GO" id="GO:0004602">
    <property type="term" value="F:glutathione peroxidase activity"/>
    <property type="evidence" value="ECO:0000314"/>
    <property type="project" value="FlyBase"/>
</dbReference>
<dbReference type="GO" id="GO:0004364">
    <property type="term" value="F:glutathione transferase activity"/>
    <property type="evidence" value="ECO:0000314"/>
    <property type="project" value="FlyBase"/>
</dbReference>
<dbReference type="GO" id="GO:0006749">
    <property type="term" value="P:glutathione metabolic process"/>
    <property type="evidence" value="ECO:0000314"/>
    <property type="project" value="FlyBase"/>
</dbReference>
<dbReference type="CDD" id="cd03177">
    <property type="entry name" value="GST_C_Delta_Epsilon"/>
    <property type="match status" value="1"/>
</dbReference>
<dbReference type="CDD" id="cd03045">
    <property type="entry name" value="GST_N_Delta_Epsilon"/>
    <property type="match status" value="1"/>
</dbReference>
<dbReference type="FunFam" id="3.40.30.10:FF:000034">
    <property type="entry name" value="glutathione S-transferase 1"/>
    <property type="match status" value="1"/>
</dbReference>
<dbReference type="FunFam" id="1.20.1050.10:FF:000007">
    <property type="entry name" value="Glutathione S-transferase 1-1"/>
    <property type="match status" value="1"/>
</dbReference>
<dbReference type="Gene3D" id="1.20.1050.10">
    <property type="match status" value="1"/>
</dbReference>
<dbReference type="Gene3D" id="3.40.30.10">
    <property type="entry name" value="Glutaredoxin"/>
    <property type="match status" value="1"/>
</dbReference>
<dbReference type="InterPro" id="IPR010987">
    <property type="entry name" value="Glutathione-S-Trfase_C-like"/>
</dbReference>
<dbReference type="InterPro" id="IPR036282">
    <property type="entry name" value="Glutathione-S-Trfase_C_sf"/>
</dbReference>
<dbReference type="InterPro" id="IPR040079">
    <property type="entry name" value="Glutathione_S-Trfase"/>
</dbReference>
<dbReference type="InterPro" id="IPR004045">
    <property type="entry name" value="Glutathione_S-Trfase_N"/>
</dbReference>
<dbReference type="InterPro" id="IPR004046">
    <property type="entry name" value="GST_C"/>
</dbReference>
<dbReference type="InterPro" id="IPR036249">
    <property type="entry name" value="Thioredoxin-like_sf"/>
</dbReference>
<dbReference type="PANTHER" id="PTHR43969">
    <property type="entry name" value="GLUTATHIONE S TRANSFERASE D10, ISOFORM A-RELATED"/>
    <property type="match status" value="1"/>
</dbReference>
<dbReference type="PANTHER" id="PTHR43969:SF9">
    <property type="entry name" value="GLUTATHIONE S TRANSFERASE D10, ISOFORM A-RELATED"/>
    <property type="match status" value="1"/>
</dbReference>
<dbReference type="Pfam" id="PF00043">
    <property type="entry name" value="GST_C"/>
    <property type="match status" value="1"/>
</dbReference>
<dbReference type="Pfam" id="PF02798">
    <property type="entry name" value="GST_N"/>
    <property type="match status" value="1"/>
</dbReference>
<dbReference type="SFLD" id="SFLDS00019">
    <property type="entry name" value="Glutathione_Transferase_(cytos"/>
    <property type="match status" value="1"/>
</dbReference>
<dbReference type="SFLD" id="SFLDG01153">
    <property type="entry name" value="Main.4:_Theta-like"/>
    <property type="match status" value="1"/>
</dbReference>
<dbReference type="SUPFAM" id="SSF47616">
    <property type="entry name" value="GST C-terminal domain-like"/>
    <property type="match status" value="1"/>
</dbReference>
<dbReference type="SUPFAM" id="SSF52833">
    <property type="entry name" value="Thioredoxin-like"/>
    <property type="match status" value="1"/>
</dbReference>
<dbReference type="PROSITE" id="PS50405">
    <property type="entry name" value="GST_CTER"/>
    <property type="match status" value="1"/>
</dbReference>
<dbReference type="PROSITE" id="PS50404">
    <property type="entry name" value="GST_NTER"/>
    <property type="match status" value="1"/>
</dbReference>